<name>HIS4_BACC0</name>
<evidence type="ECO:0000255" key="1">
    <source>
        <dbReference type="HAMAP-Rule" id="MF_01014"/>
    </source>
</evidence>
<reference key="1">
    <citation type="submission" date="2008-10" db="EMBL/GenBank/DDBJ databases">
        <title>Genome sequence of Bacillus cereus AH820.</title>
        <authorList>
            <person name="Dodson R.J."/>
            <person name="Durkin A.S."/>
            <person name="Rosovitz M.J."/>
            <person name="Rasko D.A."/>
            <person name="Hoffmaster A."/>
            <person name="Ravel J."/>
            <person name="Sutton G."/>
        </authorList>
    </citation>
    <scope>NUCLEOTIDE SEQUENCE [LARGE SCALE GENOMIC DNA]</scope>
    <source>
        <strain>AH820</strain>
    </source>
</reference>
<proteinExistence type="inferred from homology"/>
<sequence>MEIFPAIDLKEGRCVRLYQGEFSKETVMNEDPVAQAIIFEKFGAKRLHIVDLDGAVAGESLNLSVIERICKAVRIPVQVGGGIRSLVAVEKLFSVGVDKVILGTAALYDKTFLEEAVLLYKEKIIVGIDAKNGFVATRGWLDVSEISYIDLAKQMEKIGVQTIVFTDISKDGTLGGPNVEQLELLQKSVAIRLIASGGVASIQDVKKLNDMNIYGVIIGKALYEKTIDLEEVLEVTKLC</sequence>
<keyword id="KW-0028">Amino-acid biosynthesis</keyword>
<keyword id="KW-0963">Cytoplasm</keyword>
<keyword id="KW-0368">Histidine biosynthesis</keyword>
<keyword id="KW-0413">Isomerase</keyword>
<dbReference type="EC" id="5.3.1.16" evidence="1"/>
<dbReference type="EMBL" id="CP001283">
    <property type="protein sequence ID" value="ACK88073.1"/>
    <property type="molecule type" value="Genomic_DNA"/>
</dbReference>
<dbReference type="RefSeq" id="WP_000402282.1">
    <property type="nucleotide sequence ID" value="NC_011773.1"/>
</dbReference>
<dbReference type="SMR" id="B7JFZ4"/>
<dbReference type="KEGG" id="bcu:BCAH820_1500"/>
<dbReference type="HOGENOM" id="CLU_048577_1_1_9"/>
<dbReference type="UniPathway" id="UPA00031">
    <property type="reaction ID" value="UER00009"/>
</dbReference>
<dbReference type="Proteomes" id="UP000001363">
    <property type="component" value="Chromosome"/>
</dbReference>
<dbReference type="GO" id="GO:0005737">
    <property type="term" value="C:cytoplasm"/>
    <property type="evidence" value="ECO:0007669"/>
    <property type="project" value="UniProtKB-SubCell"/>
</dbReference>
<dbReference type="GO" id="GO:0003949">
    <property type="term" value="F:1-(5-phosphoribosyl)-5-[(5-phosphoribosylamino)methylideneamino]imidazole-4-carboxamide isomerase activity"/>
    <property type="evidence" value="ECO:0007669"/>
    <property type="project" value="UniProtKB-UniRule"/>
</dbReference>
<dbReference type="GO" id="GO:0000105">
    <property type="term" value="P:L-histidine biosynthetic process"/>
    <property type="evidence" value="ECO:0007669"/>
    <property type="project" value="UniProtKB-UniRule"/>
</dbReference>
<dbReference type="GO" id="GO:0000162">
    <property type="term" value="P:L-tryptophan biosynthetic process"/>
    <property type="evidence" value="ECO:0007669"/>
    <property type="project" value="TreeGrafter"/>
</dbReference>
<dbReference type="CDD" id="cd04732">
    <property type="entry name" value="HisA"/>
    <property type="match status" value="1"/>
</dbReference>
<dbReference type="FunFam" id="3.20.20.70:FF:000009">
    <property type="entry name" value="1-(5-phosphoribosyl)-5-[(5-phosphoribosylamino)methylideneamino] imidazole-4-carboxamide isomerase"/>
    <property type="match status" value="1"/>
</dbReference>
<dbReference type="Gene3D" id="3.20.20.70">
    <property type="entry name" value="Aldolase class I"/>
    <property type="match status" value="1"/>
</dbReference>
<dbReference type="HAMAP" id="MF_01014">
    <property type="entry name" value="HisA"/>
    <property type="match status" value="1"/>
</dbReference>
<dbReference type="InterPro" id="IPR013785">
    <property type="entry name" value="Aldolase_TIM"/>
</dbReference>
<dbReference type="InterPro" id="IPR006062">
    <property type="entry name" value="His_biosynth"/>
</dbReference>
<dbReference type="InterPro" id="IPR006063">
    <property type="entry name" value="HisA_bact_arch"/>
</dbReference>
<dbReference type="InterPro" id="IPR044524">
    <property type="entry name" value="Isoase_HisA-like"/>
</dbReference>
<dbReference type="InterPro" id="IPR023016">
    <property type="entry name" value="Isoase_HisA-like_bact"/>
</dbReference>
<dbReference type="InterPro" id="IPR011060">
    <property type="entry name" value="RibuloseP-bd_barrel"/>
</dbReference>
<dbReference type="NCBIfam" id="TIGR00007">
    <property type="entry name" value="1-(5-phosphoribosyl)-5-[(5-phosphoribosylamino)methylideneamino]imidazole-4-carboxamide isomerase"/>
    <property type="match status" value="1"/>
</dbReference>
<dbReference type="PANTHER" id="PTHR43090">
    <property type="entry name" value="1-(5-PHOSPHORIBOSYL)-5-[(5-PHOSPHORIBOSYLAMINO)METHYLIDENEAMINO] IMIDAZOLE-4-CARBOXAMIDE ISOMERASE"/>
    <property type="match status" value="1"/>
</dbReference>
<dbReference type="PANTHER" id="PTHR43090:SF2">
    <property type="entry name" value="1-(5-PHOSPHORIBOSYL)-5-[(5-PHOSPHORIBOSYLAMINO)METHYLIDENEAMINO] IMIDAZOLE-4-CARBOXAMIDE ISOMERASE"/>
    <property type="match status" value="1"/>
</dbReference>
<dbReference type="Pfam" id="PF00977">
    <property type="entry name" value="His_biosynth"/>
    <property type="match status" value="1"/>
</dbReference>
<dbReference type="SUPFAM" id="SSF51366">
    <property type="entry name" value="Ribulose-phoshate binding barrel"/>
    <property type="match status" value="1"/>
</dbReference>
<protein>
    <recommendedName>
        <fullName evidence="1">1-(5-phosphoribosyl)-5-[(5-phosphoribosylamino)methylideneamino] imidazole-4-carboxamide isomerase</fullName>
        <ecNumber evidence="1">5.3.1.16</ecNumber>
    </recommendedName>
    <alternativeName>
        <fullName evidence="1">Phosphoribosylformimino-5-aminoimidazole carboxamide ribotide isomerase</fullName>
    </alternativeName>
</protein>
<comment type="catalytic activity">
    <reaction evidence="1">
        <text>1-(5-phospho-beta-D-ribosyl)-5-[(5-phospho-beta-D-ribosylamino)methylideneamino]imidazole-4-carboxamide = 5-[(5-phospho-1-deoxy-D-ribulos-1-ylimino)methylamino]-1-(5-phospho-beta-D-ribosyl)imidazole-4-carboxamide</text>
        <dbReference type="Rhea" id="RHEA:15469"/>
        <dbReference type="ChEBI" id="CHEBI:58435"/>
        <dbReference type="ChEBI" id="CHEBI:58525"/>
        <dbReference type="EC" id="5.3.1.16"/>
    </reaction>
</comment>
<comment type="pathway">
    <text evidence="1">Amino-acid biosynthesis; L-histidine biosynthesis; L-histidine from 5-phospho-alpha-D-ribose 1-diphosphate: step 4/9.</text>
</comment>
<comment type="subcellular location">
    <subcellularLocation>
        <location evidence="1">Cytoplasm</location>
    </subcellularLocation>
</comment>
<comment type="similarity">
    <text evidence="1">Belongs to the HisA/HisF family.</text>
</comment>
<organism>
    <name type="scientific">Bacillus cereus (strain AH820)</name>
    <dbReference type="NCBI Taxonomy" id="405535"/>
    <lineage>
        <taxon>Bacteria</taxon>
        <taxon>Bacillati</taxon>
        <taxon>Bacillota</taxon>
        <taxon>Bacilli</taxon>
        <taxon>Bacillales</taxon>
        <taxon>Bacillaceae</taxon>
        <taxon>Bacillus</taxon>
        <taxon>Bacillus cereus group</taxon>
    </lineage>
</organism>
<gene>
    <name evidence="1" type="primary">hisA</name>
    <name type="ordered locus">BCAH820_1500</name>
</gene>
<feature type="chain" id="PRO_1000135078" description="1-(5-phosphoribosyl)-5-[(5-phosphoribosylamino)methylideneamino] imidazole-4-carboxamide isomerase">
    <location>
        <begin position="1"/>
        <end position="239"/>
    </location>
</feature>
<feature type="active site" description="Proton acceptor" evidence="1">
    <location>
        <position position="8"/>
    </location>
</feature>
<feature type="active site" description="Proton donor" evidence="1">
    <location>
        <position position="129"/>
    </location>
</feature>
<accession>B7JFZ4</accession>